<feature type="chain" id="PRO_1000187701" description="Membrane protein insertase YidC">
    <location>
        <begin position="1"/>
        <end position="548"/>
    </location>
</feature>
<feature type="transmembrane region" description="Helical" evidence="1">
    <location>
        <begin position="6"/>
        <end position="26"/>
    </location>
</feature>
<feature type="transmembrane region" description="Helical" evidence="1">
    <location>
        <begin position="350"/>
        <end position="370"/>
    </location>
</feature>
<feature type="transmembrane region" description="Helical" evidence="1">
    <location>
        <begin position="424"/>
        <end position="444"/>
    </location>
</feature>
<feature type="transmembrane region" description="Helical" evidence="1">
    <location>
        <begin position="458"/>
        <end position="478"/>
    </location>
</feature>
<feature type="transmembrane region" description="Helical" evidence="1">
    <location>
        <begin position="499"/>
        <end position="519"/>
    </location>
</feature>
<feature type="region of interest" description="Disordered" evidence="2">
    <location>
        <begin position="28"/>
        <end position="56"/>
    </location>
</feature>
<feature type="compositionally biased region" description="Low complexity" evidence="2">
    <location>
        <begin position="29"/>
        <end position="42"/>
    </location>
</feature>
<keyword id="KW-0997">Cell inner membrane</keyword>
<keyword id="KW-1003">Cell membrane</keyword>
<keyword id="KW-0143">Chaperone</keyword>
<keyword id="KW-0472">Membrane</keyword>
<keyword id="KW-0653">Protein transport</keyword>
<keyword id="KW-0812">Transmembrane</keyword>
<keyword id="KW-1133">Transmembrane helix</keyword>
<keyword id="KW-0813">Transport</keyword>
<reference key="1">
    <citation type="journal article" date="2011" name="J. Bacteriol.">
        <title>Comparative genomics of 28 Salmonella enterica isolates: evidence for CRISPR-mediated adaptive sublineage evolution.</title>
        <authorList>
            <person name="Fricke W.F."/>
            <person name="Mammel M.K."/>
            <person name="McDermott P.F."/>
            <person name="Tartera C."/>
            <person name="White D.G."/>
            <person name="Leclerc J.E."/>
            <person name="Ravel J."/>
            <person name="Cebula T.A."/>
        </authorList>
    </citation>
    <scope>NUCLEOTIDE SEQUENCE [LARGE SCALE GENOMIC DNA]</scope>
    <source>
        <strain>SL254</strain>
    </source>
</reference>
<sequence>MDSQRNLLVIALLFVSFMIWQAWEQDKNPQPQTQQTTQTTTTAAGSAADQGVPASGQGKMITVKTDVLDLTINTRGGDVEQALLPAYPKELGSNEPFQLLETTPQFIYQAQSGLTGRGGPDNPANGPRPLYNVEKEAFVLADGQNELQVPMTYTDAAGNTFTKTFVFKRGDYAVNVNYSVQNAGEKPLEVSTFGQLKQSVNLPPHRDTGSSNFALHTFRGAAYSTPDEKYEKYKFDTIADNENLNVSSKGGWVAMLQQYFATAWIPRNDGTNNFYTANLGNGIVAIGYKAQPVLVQPGQTGAMTSTLWVGPEIQDKMAAVAPHLDLTVDYGWLWFISQPLFKLLKWIHSFVGNWGFSIIIITFIVRGIMYPLTKAQYTSMAKMRMLQPKIQAMRERLGDDKQRQSQEMMALYKAEKVNPLGGCFPLIIQMPIFLALYYMLMGSIELRHAPFALWIHDLSAQDPYYILPILMGVTMFFIQKMSPTTVTDPMQQKIMTFMPVIFTVFFLWFPSGLVLYYIVSNLVTIIQQQLIYRGLEKRGLHSREKKKS</sequence>
<dbReference type="EMBL" id="CP001113">
    <property type="protein sequence ID" value="ACF65258.1"/>
    <property type="molecule type" value="Genomic_DNA"/>
</dbReference>
<dbReference type="RefSeq" id="WP_000378286.1">
    <property type="nucleotide sequence ID" value="NZ_CCMR01000001.1"/>
</dbReference>
<dbReference type="SMR" id="B4SYB1"/>
<dbReference type="KEGG" id="see:SNSL254_A4126"/>
<dbReference type="HOGENOM" id="CLU_016535_3_0_6"/>
<dbReference type="Proteomes" id="UP000008824">
    <property type="component" value="Chromosome"/>
</dbReference>
<dbReference type="GO" id="GO:0005886">
    <property type="term" value="C:plasma membrane"/>
    <property type="evidence" value="ECO:0007669"/>
    <property type="project" value="UniProtKB-SubCell"/>
</dbReference>
<dbReference type="GO" id="GO:0032977">
    <property type="term" value="F:membrane insertase activity"/>
    <property type="evidence" value="ECO:0007669"/>
    <property type="project" value="InterPro"/>
</dbReference>
<dbReference type="GO" id="GO:0051205">
    <property type="term" value="P:protein insertion into membrane"/>
    <property type="evidence" value="ECO:0007669"/>
    <property type="project" value="TreeGrafter"/>
</dbReference>
<dbReference type="GO" id="GO:0015031">
    <property type="term" value="P:protein transport"/>
    <property type="evidence" value="ECO:0007669"/>
    <property type="project" value="UniProtKB-KW"/>
</dbReference>
<dbReference type="CDD" id="cd20070">
    <property type="entry name" value="5TM_YidC_Alb3"/>
    <property type="match status" value="1"/>
</dbReference>
<dbReference type="CDD" id="cd19961">
    <property type="entry name" value="EcYidC-like_peri"/>
    <property type="match status" value="1"/>
</dbReference>
<dbReference type="FunFam" id="2.70.98.90:FF:000001">
    <property type="entry name" value="Membrane protein insertase YidC"/>
    <property type="match status" value="1"/>
</dbReference>
<dbReference type="Gene3D" id="2.70.98.90">
    <property type="match status" value="1"/>
</dbReference>
<dbReference type="HAMAP" id="MF_01810">
    <property type="entry name" value="YidC_type1"/>
    <property type="match status" value="1"/>
</dbReference>
<dbReference type="InterPro" id="IPR019998">
    <property type="entry name" value="Membr_insert_YidC"/>
</dbReference>
<dbReference type="InterPro" id="IPR028053">
    <property type="entry name" value="Membr_insert_YidC_N"/>
</dbReference>
<dbReference type="InterPro" id="IPR001708">
    <property type="entry name" value="YidC/ALB3/OXA1/COX18"/>
</dbReference>
<dbReference type="InterPro" id="IPR028055">
    <property type="entry name" value="YidC/Oxa/ALB_C"/>
</dbReference>
<dbReference type="InterPro" id="IPR047196">
    <property type="entry name" value="YidC_ALB_C"/>
</dbReference>
<dbReference type="InterPro" id="IPR038221">
    <property type="entry name" value="YidC_periplasmic_sf"/>
</dbReference>
<dbReference type="NCBIfam" id="NF002351">
    <property type="entry name" value="PRK01318.1-1"/>
    <property type="match status" value="1"/>
</dbReference>
<dbReference type="NCBIfam" id="NF002352">
    <property type="entry name" value="PRK01318.1-3"/>
    <property type="match status" value="1"/>
</dbReference>
<dbReference type="NCBIfam" id="NF002353">
    <property type="entry name" value="PRK01318.1-4"/>
    <property type="match status" value="1"/>
</dbReference>
<dbReference type="NCBIfam" id="TIGR03593">
    <property type="entry name" value="yidC_nterm"/>
    <property type="match status" value="1"/>
</dbReference>
<dbReference type="NCBIfam" id="TIGR03592">
    <property type="entry name" value="yidC_oxa1_cterm"/>
    <property type="match status" value="1"/>
</dbReference>
<dbReference type="PANTHER" id="PTHR12428:SF65">
    <property type="entry name" value="CYTOCHROME C OXIDASE ASSEMBLY PROTEIN COX18, MITOCHONDRIAL"/>
    <property type="match status" value="1"/>
</dbReference>
<dbReference type="PANTHER" id="PTHR12428">
    <property type="entry name" value="OXA1"/>
    <property type="match status" value="1"/>
</dbReference>
<dbReference type="Pfam" id="PF02096">
    <property type="entry name" value="60KD_IMP"/>
    <property type="match status" value="1"/>
</dbReference>
<dbReference type="Pfam" id="PF14849">
    <property type="entry name" value="YidC_periplas"/>
    <property type="match status" value="1"/>
</dbReference>
<dbReference type="PRINTS" id="PR00701">
    <property type="entry name" value="60KDINNERMP"/>
</dbReference>
<dbReference type="PRINTS" id="PR01900">
    <property type="entry name" value="YIDCPROTEIN"/>
</dbReference>
<accession>B4SYB1</accession>
<gene>
    <name evidence="1" type="primary">yidC</name>
    <name type="ordered locus">SNSL254_A4126</name>
</gene>
<protein>
    <recommendedName>
        <fullName evidence="1">Membrane protein insertase YidC</fullName>
    </recommendedName>
    <alternativeName>
        <fullName evidence="1">Foldase YidC</fullName>
    </alternativeName>
    <alternativeName>
        <fullName evidence="1">Membrane integrase YidC</fullName>
    </alternativeName>
    <alternativeName>
        <fullName evidence="1">Membrane protein YidC</fullName>
    </alternativeName>
</protein>
<name>YIDC_SALNS</name>
<evidence type="ECO:0000255" key="1">
    <source>
        <dbReference type="HAMAP-Rule" id="MF_01810"/>
    </source>
</evidence>
<evidence type="ECO:0000256" key="2">
    <source>
        <dbReference type="SAM" id="MobiDB-lite"/>
    </source>
</evidence>
<proteinExistence type="inferred from homology"/>
<comment type="function">
    <text evidence="1">Required for the insertion and/or proper folding and/or complex formation of integral membrane proteins into the membrane. Involved in integration of membrane proteins that insert both dependently and independently of the Sec translocase complex, as well as at least some lipoproteins. Aids folding of multispanning membrane proteins.</text>
</comment>
<comment type="subunit">
    <text evidence="1">Interacts with the Sec translocase complex via SecD. Specifically interacts with transmembrane segments of nascent integral membrane proteins during membrane integration.</text>
</comment>
<comment type="subcellular location">
    <subcellularLocation>
        <location evidence="1">Cell inner membrane</location>
        <topology evidence="1">Multi-pass membrane protein</topology>
    </subcellularLocation>
</comment>
<comment type="similarity">
    <text evidence="1">Belongs to the OXA1/ALB3/YidC family. Type 1 subfamily.</text>
</comment>
<organism>
    <name type="scientific">Salmonella newport (strain SL254)</name>
    <dbReference type="NCBI Taxonomy" id="423368"/>
    <lineage>
        <taxon>Bacteria</taxon>
        <taxon>Pseudomonadati</taxon>
        <taxon>Pseudomonadota</taxon>
        <taxon>Gammaproteobacteria</taxon>
        <taxon>Enterobacterales</taxon>
        <taxon>Enterobacteriaceae</taxon>
        <taxon>Salmonella</taxon>
    </lineage>
</organism>